<protein>
    <recommendedName>
        <fullName evidence="1">3-phosphoshikimate 1-carboxyvinyltransferase</fullName>
        <ecNumber evidence="1">2.5.1.19</ecNumber>
    </recommendedName>
    <alternativeName>
        <fullName evidence="1">5-enolpyruvylshikimate-3-phosphate synthase</fullName>
        <shortName evidence="1">EPSP synthase</shortName>
        <shortName evidence="1">EPSPS</shortName>
    </alternativeName>
</protein>
<comment type="function">
    <text evidence="1">Catalyzes the transfer of the enolpyruvyl moiety of phosphoenolpyruvate (PEP) to the 5-hydroxyl of shikimate-3-phosphate (S3P) to produce enolpyruvyl shikimate-3-phosphate and inorganic phosphate.</text>
</comment>
<comment type="catalytic activity">
    <reaction evidence="1">
        <text>3-phosphoshikimate + phosphoenolpyruvate = 5-O-(1-carboxyvinyl)-3-phosphoshikimate + phosphate</text>
        <dbReference type="Rhea" id="RHEA:21256"/>
        <dbReference type="ChEBI" id="CHEBI:43474"/>
        <dbReference type="ChEBI" id="CHEBI:57701"/>
        <dbReference type="ChEBI" id="CHEBI:58702"/>
        <dbReference type="ChEBI" id="CHEBI:145989"/>
        <dbReference type="EC" id="2.5.1.19"/>
    </reaction>
    <physiologicalReaction direction="left-to-right" evidence="1">
        <dbReference type="Rhea" id="RHEA:21257"/>
    </physiologicalReaction>
</comment>
<comment type="pathway">
    <text evidence="1">Metabolic intermediate biosynthesis; chorismate biosynthesis.</text>
</comment>
<comment type="subunit">
    <text evidence="1">Monomer.</text>
</comment>
<comment type="subcellular location">
    <subcellularLocation>
        <location evidence="1">Cytoplasm</location>
    </subcellularLocation>
</comment>
<comment type="similarity">
    <text evidence="1">Belongs to the EPSP synthase family.</text>
</comment>
<feature type="chain" id="PRO_0000088338" description="3-phosphoshikimate 1-carboxyvinyltransferase">
    <location>
        <begin position="1"/>
        <end position="408"/>
    </location>
</feature>
<feature type="active site" description="Proton acceptor" evidence="1">
    <location>
        <position position="293"/>
    </location>
</feature>
<feature type="binding site" evidence="1">
    <location>
        <position position="20"/>
    </location>
    <ligand>
        <name>3-phosphoshikimate</name>
        <dbReference type="ChEBI" id="CHEBI:145989"/>
    </ligand>
</feature>
<feature type="binding site" evidence="1">
    <location>
        <position position="20"/>
    </location>
    <ligand>
        <name>phosphoenolpyruvate</name>
        <dbReference type="ChEBI" id="CHEBI:58702"/>
    </ligand>
</feature>
<feature type="binding site" evidence="1">
    <location>
        <position position="21"/>
    </location>
    <ligand>
        <name>3-phosphoshikimate</name>
        <dbReference type="ChEBI" id="CHEBI:145989"/>
    </ligand>
</feature>
<feature type="binding site" evidence="1">
    <location>
        <position position="25"/>
    </location>
    <ligand>
        <name>3-phosphoshikimate</name>
        <dbReference type="ChEBI" id="CHEBI:145989"/>
    </ligand>
</feature>
<feature type="binding site" evidence="1">
    <location>
        <position position="111"/>
    </location>
    <ligand>
        <name>phosphoenolpyruvate</name>
        <dbReference type="ChEBI" id="CHEBI:58702"/>
    </ligand>
</feature>
<feature type="binding site" evidence="1">
    <location>
        <position position="151"/>
    </location>
    <ligand>
        <name>3-phosphoshikimate</name>
        <dbReference type="ChEBI" id="CHEBI:145989"/>
    </ligand>
</feature>
<feature type="binding site" evidence="1">
    <location>
        <position position="152"/>
    </location>
    <ligand>
        <name>3-phosphoshikimate</name>
        <dbReference type="ChEBI" id="CHEBI:145989"/>
    </ligand>
</feature>
<feature type="binding site" evidence="1">
    <location>
        <position position="153"/>
    </location>
    <ligand>
        <name>3-phosphoshikimate</name>
        <dbReference type="ChEBI" id="CHEBI:145989"/>
    </ligand>
</feature>
<feature type="binding site" evidence="1">
    <location>
        <position position="153"/>
    </location>
    <ligand>
        <name>phosphoenolpyruvate</name>
        <dbReference type="ChEBI" id="CHEBI:58702"/>
    </ligand>
</feature>
<feature type="binding site" evidence="1">
    <location>
        <position position="178"/>
    </location>
    <ligand>
        <name>3-phosphoshikimate</name>
        <dbReference type="ChEBI" id="CHEBI:145989"/>
    </ligand>
</feature>
<feature type="binding site" evidence="1">
    <location>
        <position position="293"/>
    </location>
    <ligand>
        <name>3-phosphoshikimate</name>
        <dbReference type="ChEBI" id="CHEBI:145989"/>
    </ligand>
</feature>
<feature type="binding site" evidence="1">
    <location>
        <position position="320"/>
    </location>
    <ligand>
        <name>3-phosphoshikimate</name>
        <dbReference type="ChEBI" id="CHEBI:145989"/>
    </ligand>
</feature>
<feature type="binding site" evidence="1">
    <location>
        <position position="324"/>
    </location>
    <ligand>
        <name>phosphoenolpyruvate</name>
        <dbReference type="ChEBI" id="CHEBI:58702"/>
    </ligand>
</feature>
<feature type="binding site" evidence="1">
    <location>
        <position position="365"/>
    </location>
    <ligand>
        <name>phosphoenolpyruvate</name>
        <dbReference type="ChEBI" id="CHEBI:58702"/>
    </ligand>
</feature>
<feature type="binding site" evidence="1">
    <location>
        <position position="389"/>
    </location>
    <ligand>
        <name>phosphoenolpyruvate</name>
        <dbReference type="ChEBI" id="CHEBI:58702"/>
    </ligand>
</feature>
<dbReference type="EC" id="2.5.1.19" evidence="1"/>
<dbReference type="EMBL" id="BA000023">
    <property type="protein sequence ID" value="BAK54775.1"/>
    <property type="molecule type" value="Genomic_DNA"/>
</dbReference>
<dbReference type="RefSeq" id="WP_010980361.1">
    <property type="nucleotide sequence ID" value="NC_003106.2"/>
</dbReference>
<dbReference type="SMR" id="Q96Y91"/>
<dbReference type="STRING" id="273063.STK_22770"/>
<dbReference type="GeneID" id="1460359"/>
<dbReference type="KEGG" id="sto:STK_22770"/>
<dbReference type="PATRIC" id="fig|273063.9.peg.2580"/>
<dbReference type="eggNOG" id="arCOG04134">
    <property type="taxonomic scope" value="Archaea"/>
</dbReference>
<dbReference type="OrthoDB" id="43788at2157"/>
<dbReference type="UniPathway" id="UPA00053"/>
<dbReference type="Proteomes" id="UP000001015">
    <property type="component" value="Chromosome"/>
</dbReference>
<dbReference type="GO" id="GO:0005737">
    <property type="term" value="C:cytoplasm"/>
    <property type="evidence" value="ECO:0007669"/>
    <property type="project" value="UniProtKB-SubCell"/>
</dbReference>
<dbReference type="GO" id="GO:0003866">
    <property type="term" value="F:3-phosphoshikimate 1-carboxyvinyltransferase activity"/>
    <property type="evidence" value="ECO:0007669"/>
    <property type="project" value="UniProtKB-UniRule"/>
</dbReference>
<dbReference type="GO" id="GO:0008652">
    <property type="term" value="P:amino acid biosynthetic process"/>
    <property type="evidence" value="ECO:0007669"/>
    <property type="project" value="UniProtKB-KW"/>
</dbReference>
<dbReference type="GO" id="GO:0009073">
    <property type="term" value="P:aromatic amino acid family biosynthetic process"/>
    <property type="evidence" value="ECO:0007669"/>
    <property type="project" value="UniProtKB-KW"/>
</dbReference>
<dbReference type="GO" id="GO:0009423">
    <property type="term" value="P:chorismate biosynthetic process"/>
    <property type="evidence" value="ECO:0007669"/>
    <property type="project" value="UniProtKB-UniRule"/>
</dbReference>
<dbReference type="CDD" id="cd01556">
    <property type="entry name" value="EPSP_synthase"/>
    <property type="match status" value="1"/>
</dbReference>
<dbReference type="Gene3D" id="3.65.10.10">
    <property type="entry name" value="Enolpyruvate transferase domain"/>
    <property type="match status" value="2"/>
</dbReference>
<dbReference type="HAMAP" id="MF_00210">
    <property type="entry name" value="EPSP_synth"/>
    <property type="match status" value="1"/>
</dbReference>
<dbReference type="InterPro" id="IPR001986">
    <property type="entry name" value="Enolpyruvate_Tfrase_dom"/>
</dbReference>
<dbReference type="InterPro" id="IPR036968">
    <property type="entry name" value="Enolpyruvate_Tfrase_sf"/>
</dbReference>
<dbReference type="InterPro" id="IPR006264">
    <property type="entry name" value="EPSP_synthase"/>
</dbReference>
<dbReference type="InterPro" id="IPR023193">
    <property type="entry name" value="EPSP_synthase_CS"/>
</dbReference>
<dbReference type="InterPro" id="IPR013792">
    <property type="entry name" value="RNA3'P_cycl/enolpyr_Trfase_a/b"/>
</dbReference>
<dbReference type="NCBIfam" id="TIGR01356">
    <property type="entry name" value="aroA"/>
    <property type="match status" value="1"/>
</dbReference>
<dbReference type="PANTHER" id="PTHR21090">
    <property type="entry name" value="AROM/DEHYDROQUINATE SYNTHASE"/>
    <property type="match status" value="1"/>
</dbReference>
<dbReference type="PANTHER" id="PTHR21090:SF5">
    <property type="entry name" value="PENTAFUNCTIONAL AROM POLYPEPTIDE"/>
    <property type="match status" value="1"/>
</dbReference>
<dbReference type="Pfam" id="PF00275">
    <property type="entry name" value="EPSP_synthase"/>
    <property type="match status" value="1"/>
</dbReference>
<dbReference type="PIRSF" id="PIRSF000505">
    <property type="entry name" value="EPSPS"/>
    <property type="match status" value="1"/>
</dbReference>
<dbReference type="SUPFAM" id="SSF55205">
    <property type="entry name" value="EPT/RTPC-like"/>
    <property type="match status" value="1"/>
</dbReference>
<dbReference type="PROSITE" id="PS00885">
    <property type="entry name" value="EPSP_SYNTHASE_2"/>
    <property type="match status" value="1"/>
</dbReference>
<sequence>MLVEINPSKIYGKVKAPQSKSFGIRLVLYSLLKESKLDNLIPSDDVNVAINVVKQLGVSVEGTYFKREKELVTPKFLYFGGSATTLRMSIPILSVLGVDTIIDGDETLRKRPLNAIIKALEGSVSFSSSLLPTKISGKLKENFVRIEGGESSQYISGFIYAFSLVGGGEIEIIPPISSKSYIYLTIELLNSLGGNIKMKGNKIYVEKGDFKPYIGKVPGDYALASFYASSSIVSGGEIVIEDVYELPNFDGDHSIVNFYKMMGAESYVKDNKWIVKSSEKLNGIEVNVDDYPDLAPSIASLAPFSSSPTIIKGIKRLKTKESNRVVTISETLSKFGVKVEYDEDKIVIYPSEVKAGHVICPNDHRIAMLASVLSFKSGGTIEKAECVNKSNPNFWKDLISLNGRIIIR</sequence>
<proteinExistence type="inferred from homology"/>
<accession>Q96Y91</accession>
<accession>F9VPC8</accession>
<reference key="1">
    <citation type="journal article" date="2001" name="DNA Res.">
        <title>Complete genome sequence of an aerobic thermoacidophilic Crenarchaeon, Sulfolobus tokodaii strain7.</title>
        <authorList>
            <person name="Kawarabayasi Y."/>
            <person name="Hino Y."/>
            <person name="Horikawa H."/>
            <person name="Jin-no K."/>
            <person name="Takahashi M."/>
            <person name="Sekine M."/>
            <person name="Baba S."/>
            <person name="Ankai A."/>
            <person name="Kosugi H."/>
            <person name="Hosoyama A."/>
            <person name="Fukui S."/>
            <person name="Nagai Y."/>
            <person name="Nishijima K."/>
            <person name="Otsuka R."/>
            <person name="Nakazawa H."/>
            <person name="Takamiya M."/>
            <person name="Kato Y."/>
            <person name="Yoshizawa T."/>
            <person name="Tanaka T."/>
            <person name="Kudoh Y."/>
            <person name="Yamazaki J."/>
            <person name="Kushida N."/>
            <person name="Oguchi A."/>
            <person name="Aoki K."/>
            <person name="Masuda S."/>
            <person name="Yanagii M."/>
            <person name="Nishimura M."/>
            <person name="Yamagishi A."/>
            <person name="Oshima T."/>
            <person name="Kikuchi H."/>
        </authorList>
    </citation>
    <scope>NUCLEOTIDE SEQUENCE [LARGE SCALE GENOMIC DNA]</scope>
    <source>
        <strain>DSM 16993 / JCM 10545 / NBRC 100140 / 7</strain>
    </source>
</reference>
<organism>
    <name type="scientific">Sulfurisphaera tokodaii (strain DSM 16993 / JCM 10545 / NBRC 100140 / 7)</name>
    <name type="common">Sulfolobus tokodaii</name>
    <dbReference type="NCBI Taxonomy" id="273063"/>
    <lineage>
        <taxon>Archaea</taxon>
        <taxon>Thermoproteota</taxon>
        <taxon>Thermoprotei</taxon>
        <taxon>Sulfolobales</taxon>
        <taxon>Sulfolobaceae</taxon>
        <taxon>Sulfurisphaera</taxon>
    </lineage>
</organism>
<gene>
    <name evidence="1" type="primary">aroA</name>
    <name type="ordered locus">STK_22770</name>
</gene>
<name>AROA_SULTO</name>
<keyword id="KW-0028">Amino-acid biosynthesis</keyword>
<keyword id="KW-0057">Aromatic amino acid biosynthesis</keyword>
<keyword id="KW-0963">Cytoplasm</keyword>
<keyword id="KW-1185">Reference proteome</keyword>
<keyword id="KW-0808">Transferase</keyword>
<evidence type="ECO:0000255" key="1">
    <source>
        <dbReference type="HAMAP-Rule" id="MF_00210"/>
    </source>
</evidence>